<proteinExistence type="evidence at protein level"/>
<evidence type="ECO:0000269" key="1">
    <source>
    </source>
</evidence>
<evidence type="ECO:0000305" key="2"/>
<evidence type="ECO:0007829" key="3">
    <source>
        <dbReference type="PDB" id="5M58"/>
    </source>
</evidence>
<accession>Q9F8T9</accession>
<organism>
    <name type="scientific">Streptomyces rishiriensis</name>
    <dbReference type="NCBI Taxonomy" id="68264"/>
    <lineage>
        <taxon>Bacteria</taxon>
        <taxon>Bacillati</taxon>
        <taxon>Actinomycetota</taxon>
        <taxon>Actinomycetes</taxon>
        <taxon>Kitasatosporales</taxon>
        <taxon>Streptomycetaceae</taxon>
        <taxon>Streptomyces</taxon>
    </lineage>
</organism>
<reference key="1">
    <citation type="journal article" date="2000" name="Antimicrob. Agents Chemother.">
        <title>Identification of the coumermycin A(1) biosynthetic gene cluster of Streptomyces rishiriensis DSM 40489.</title>
        <authorList>
            <person name="Wang Z.X."/>
            <person name="Li S.M."/>
            <person name="Heide L."/>
        </authorList>
    </citation>
    <scope>NUCLEOTIDE SEQUENCE [GENOMIC DNA]</scope>
    <source>
        <strain>ATCC 14812 / DSM 40489 / JCM 4821 / NBRC 13407 / NRRL B-3239 / 404Y3</strain>
    </source>
</reference>
<reference key="2">
    <citation type="journal article" date="2005" name="Biochemistry">
        <title>CouO and NovO: C-methyltransferases for tailoring the aminocoumarin scaffold in coumermycin and novobiocin antibiotic biosynthesis.</title>
        <authorList>
            <person name="Pacholec M."/>
            <person name="Tao J."/>
            <person name="Walsh C.T."/>
        </authorList>
    </citation>
    <scope>FUNCTION</scope>
    <scope>BIOPHYSICOCHEMICAL PROPERTIES</scope>
    <source>
        <strain>ATCC 14812 / DSM 40489 / JCM 4821 / NBRC 13407 / NRRL B-3239 / 404Y3</strain>
    </source>
</reference>
<feature type="chain" id="PRO_0000424003" description="C-methyltransferase CouO">
    <location>
        <begin position="1"/>
        <end position="230"/>
    </location>
</feature>
<feature type="helix" evidence="3">
    <location>
        <begin position="8"/>
        <end position="19"/>
    </location>
</feature>
<feature type="helix" evidence="3">
    <location>
        <begin position="22"/>
        <end position="25"/>
    </location>
</feature>
<feature type="helix" evidence="3">
    <location>
        <begin position="26"/>
        <end position="35"/>
    </location>
</feature>
<feature type="strand" evidence="3">
    <location>
        <begin position="42"/>
        <end position="46"/>
    </location>
</feature>
<feature type="helix" evidence="3">
    <location>
        <begin position="52"/>
        <end position="60"/>
    </location>
</feature>
<feature type="strand" evidence="3">
    <location>
        <begin position="65"/>
        <end position="71"/>
    </location>
</feature>
<feature type="helix" evidence="3">
    <location>
        <begin position="73"/>
        <end position="85"/>
    </location>
</feature>
<feature type="strand" evidence="3">
    <location>
        <begin position="91"/>
        <end position="94"/>
    </location>
</feature>
<feature type="helix" evidence="3">
    <location>
        <begin position="104"/>
        <end position="106"/>
    </location>
</feature>
<feature type="turn" evidence="3">
    <location>
        <begin position="107"/>
        <end position="109"/>
    </location>
</feature>
<feature type="strand" evidence="3">
    <location>
        <begin position="110"/>
        <end position="117"/>
    </location>
</feature>
<feature type="helix" evidence="3">
    <location>
        <begin position="119"/>
        <end position="121"/>
    </location>
</feature>
<feature type="helix" evidence="3">
    <location>
        <begin position="125"/>
        <end position="135"/>
    </location>
</feature>
<feature type="strand" evidence="3">
    <location>
        <begin position="136"/>
        <end position="147"/>
    </location>
</feature>
<feature type="helix" evidence="3">
    <location>
        <begin position="150"/>
        <end position="152"/>
    </location>
</feature>
<feature type="helix" evidence="3">
    <location>
        <begin position="155"/>
        <end position="166"/>
    </location>
</feature>
<feature type="helix" evidence="3">
    <location>
        <begin position="172"/>
        <end position="183"/>
    </location>
</feature>
<feature type="helix" evidence="3">
    <location>
        <begin position="188"/>
        <end position="201"/>
    </location>
</feature>
<feature type="strand" evidence="3">
    <location>
        <begin position="204"/>
        <end position="212"/>
    </location>
</feature>
<feature type="strand" evidence="3">
    <location>
        <begin position="214"/>
        <end position="218"/>
    </location>
</feature>
<feature type="strand" evidence="3">
    <location>
        <begin position="220"/>
        <end position="227"/>
    </location>
</feature>
<gene>
    <name type="primary">couO</name>
</gene>
<keyword id="KW-0002">3D-structure</keyword>
<keyword id="KW-0045">Antibiotic biosynthesis</keyword>
<keyword id="KW-0489">Methyltransferase</keyword>
<keyword id="KW-0949">S-adenosyl-L-methionine</keyword>
<keyword id="KW-0808">Transferase</keyword>
<name>COUO_STRRH</name>
<protein>
    <recommendedName>
        <fullName>C-methyltransferase CouO</fullName>
        <ecNumber>2.1.1.-</ecNumber>
    </recommendedName>
    <alternativeName>
        <fullName>Coumermycin biosynthesis protein O</fullName>
    </alternativeName>
</protein>
<dbReference type="EC" id="2.1.1.-"/>
<dbReference type="EMBL" id="AF235050">
    <property type="protein sequence ID" value="AAG29793.1"/>
    <property type="molecule type" value="Genomic_DNA"/>
</dbReference>
<dbReference type="RefSeq" id="WP_109005064.1">
    <property type="nucleotide sequence ID" value="NZ_BEWA01000022.1"/>
</dbReference>
<dbReference type="PDB" id="5M58">
    <property type="method" value="X-ray"/>
    <property type="resolution" value="2.05 A"/>
    <property type="chains" value="A/B=1-230"/>
</dbReference>
<dbReference type="PDBsum" id="5M58"/>
<dbReference type="SMR" id="Q9F8T9"/>
<dbReference type="KEGG" id="ag:AAG29793"/>
<dbReference type="OrthoDB" id="9791837at2"/>
<dbReference type="GO" id="GO:0008168">
    <property type="term" value="F:methyltransferase activity"/>
    <property type="evidence" value="ECO:0000314"/>
    <property type="project" value="UniProtKB"/>
</dbReference>
<dbReference type="GO" id="GO:0017000">
    <property type="term" value="P:antibiotic biosynthetic process"/>
    <property type="evidence" value="ECO:0000314"/>
    <property type="project" value="UniProtKB"/>
</dbReference>
<dbReference type="GO" id="GO:0032259">
    <property type="term" value="P:methylation"/>
    <property type="evidence" value="ECO:0000314"/>
    <property type="project" value="UniProtKB"/>
</dbReference>
<dbReference type="CDD" id="cd02440">
    <property type="entry name" value="AdoMet_MTases"/>
    <property type="match status" value="1"/>
</dbReference>
<dbReference type="FunFam" id="3.40.50.150:FF:000818">
    <property type="entry name" value="8-demethylnovobiocic acid C(8)-methyltransferase"/>
    <property type="match status" value="1"/>
</dbReference>
<dbReference type="Gene3D" id="3.40.50.150">
    <property type="entry name" value="Vaccinia Virus protein VP39"/>
    <property type="match status" value="1"/>
</dbReference>
<dbReference type="InterPro" id="IPR041698">
    <property type="entry name" value="Methyltransf_25"/>
</dbReference>
<dbReference type="InterPro" id="IPR029063">
    <property type="entry name" value="SAM-dependent_MTases_sf"/>
</dbReference>
<dbReference type="PANTHER" id="PTHR43861:SF1">
    <property type="entry name" value="TRANS-ACONITATE 2-METHYLTRANSFERASE"/>
    <property type="match status" value="1"/>
</dbReference>
<dbReference type="PANTHER" id="PTHR43861">
    <property type="entry name" value="TRANS-ACONITATE 2-METHYLTRANSFERASE-RELATED"/>
    <property type="match status" value="1"/>
</dbReference>
<dbReference type="Pfam" id="PF13649">
    <property type="entry name" value="Methyltransf_25"/>
    <property type="match status" value="1"/>
</dbReference>
<dbReference type="SUPFAM" id="SSF53335">
    <property type="entry name" value="S-adenosyl-L-methionine-dependent methyltransferases"/>
    <property type="match status" value="1"/>
</dbReference>
<sequence>MKIEPITGSEAEAFHRMGSRAFERYNEFVDLLVGAGIADGQTVVDLCCGSGELEIILTSRFPSLNLVGVDLSEDMVRIARDYAAEQGKELEFRHGDAQSPAGMEDLLGKADLVVSRHAFHRLTRLPAGFDTMLRLVKPGGAILNVSFLHLSDFDEPGFRTWVRFLKERPWDAEMQVAWALAHYYAPRLQDYRDALAQAADETPVSEQRIWVDDQGYGVATVKCFARRAAA</sequence>
<comment type="function">
    <text evidence="1">Mediates C-methylation at the 8-position of the aminocoumarin moieties in coumermycin A1 in the biosynthetic pathway of coumermycin antibiotic. Active on both mono- and bis-amides for mono- and di-C-methylation adjacent to the phenolic hydroxyl before it is glycosylated by CouM.</text>
</comment>
<comment type="biophysicochemical properties">
    <kinetics>
        <KM evidence="1">52 uM for desmethyl-monoamide</KM>
        <KM evidence="1">63.4 uM for monomethyl-diamide</KM>
        <KM evidence="1">63.8 uM for monomethyl-diamide</KM>
        <KM evidence="1">108.5 uM for desmethyl-novobiocic acid</KM>
        <text>kcat is 2.2 min(-1) with desmethyl-monoamide as substrate. kcat is 1.23 min(-1) with monomethyl-diamide as substrate. kcat is 1.38 min(-1) with monomethyl-diamide as substrate. kcat is 1.71 min(-1) with desmethyl-diamide as substrate. kcat is 0.23 min(-1) with desmethyl-novobiocic acid as substrate.</text>
    </kinetics>
</comment>
<comment type="pathway">
    <text>Antibiotic biosynthesis.</text>
</comment>
<comment type="similarity">
    <text evidence="2">Belongs to the methyltransferase superfamily.</text>
</comment>